<dbReference type="EMBL" id="CP000538">
    <property type="protein sequence ID" value="EAQ72316.1"/>
    <property type="molecule type" value="Genomic_DNA"/>
</dbReference>
<dbReference type="RefSeq" id="WP_009882359.1">
    <property type="nucleotide sequence ID" value="NC_008787.1"/>
</dbReference>
<dbReference type="SMR" id="A1VZ21"/>
<dbReference type="KEGG" id="cjj:CJJ81176_0689"/>
<dbReference type="eggNOG" id="COG1220">
    <property type="taxonomic scope" value="Bacteria"/>
</dbReference>
<dbReference type="HOGENOM" id="CLU_033123_0_0_7"/>
<dbReference type="Proteomes" id="UP000000646">
    <property type="component" value="Chromosome"/>
</dbReference>
<dbReference type="GO" id="GO:0009376">
    <property type="term" value="C:HslUV protease complex"/>
    <property type="evidence" value="ECO:0007669"/>
    <property type="project" value="UniProtKB-UniRule"/>
</dbReference>
<dbReference type="GO" id="GO:0005524">
    <property type="term" value="F:ATP binding"/>
    <property type="evidence" value="ECO:0007669"/>
    <property type="project" value="UniProtKB-UniRule"/>
</dbReference>
<dbReference type="GO" id="GO:0016887">
    <property type="term" value="F:ATP hydrolysis activity"/>
    <property type="evidence" value="ECO:0007669"/>
    <property type="project" value="InterPro"/>
</dbReference>
<dbReference type="GO" id="GO:0008233">
    <property type="term" value="F:peptidase activity"/>
    <property type="evidence" value="ECO:0007669"/>
    <property type="project" value="InterPro"/>
</dbReference>
<dbReference type="GO" id="GO:0036402">
    <property type="term" value="F:proteasome-activating activity"/>
    <property type="evidence" value="ECO:0007669"/>
    <property type="project" value="UniProtKB-UniRule"/>
</dbReference>
<dbReference type="GO" id="GO:0043335">
    <property type="term" value="P:protein unfolding"/>
    <property type="evidence" value="ECO:0007669"/>
    <property type="project" value="UniProtKB-UniRule"/>
</dbReference>
<dbReference type="GO" id="GO:0051603">
    <property type="term" value="P:proteolysis involved in protein catabolic process"/>
    <property type="evidence" value="ECO:0007669"/>
    <property type="project" value="TreeGrafter"/>
</dbReference>
<dbReference type="Gene3D" id="1.10.8.60">
    <property type="match status" value="1"/>
</dbReference>
<dbReference type="Gene3D" id="3.40.50.300">
    <property type="entry name" value="P-loop containing nucleotide triphosphate hydrolases"/>
    <property type="match status" value="2"/>
</dbReference>
<dbReference type="HAMAP" id="MF_00249">
    <property type="entry name" value="HslU"/>
    <property type="match status" value="1"/>
</dbReference>
<dbReference type="InterPro" id="IPR003593">
    <property type="entry name" value="AAA+_ATPase"/>
</dbReference>
<dbReference type="InterPro" id="IPR050052">
    <property type="entry name" value="ATP-dep_Clp_protease_ClpX"/>
</dbReference>
<dbReference type="InterPro" id="IPR003959">
    <property type="entry name" value="ATPase_AAA_core"/>
</dbReference>
<dbReference type="InterPro" id="IPR019489">
    <property type="entry name" value="Clp_ATPase_C"/>
</dbReference>
<dbReference type="InterPro" id="IPR004491">
    <property type="entry name" value="HslU"/>
</dbReference>
<dbReference type="InterPro" id="IPR027417">
    <property type="entry name" value="P-loop_NTPase"/>
</dbReference>
<dbReference type="NCBIfam" id="TIGR00390">
    <property type="entry name" value="hslU"/>
    <property type="match status" value="1"/>
</dbReference>
<dbReference type="NCBIfam" id="NF003544">
    <property type="entry name" value="PRK05201.1"/>
    <property type="match status" value="1"/>
</dbReference>
<dbReference type="PANTHER" id="PTHR48102">
    <property type="entry name" value="ATP-DEPENDENT CLP PROTEASE ATP-BINDING SUBUNIT CLPX-LIKE, MITOCHONDRIAL-RELATED"/>
    <property type="match status" value="1"/>
</dbReference>
<dbReference type="PANTHER" id="PTHR48102:SF3">
    <property type="entry name" value="ATP-DEPENDENT PROTEASE ATPASE SUBUNIT HSLU"/>
    <property type="match status" value="1"/>
</dbReference>
<dbReference type="Pfam" id="PF00004">
    <property type="entry name" value="AAA"/>
    <property type="match status" value="1"/>
</dbReference>
<dbReference type="Pfam" id="PF07724">
    <property type="entry name" value="AAA_2"/>
    <property type="match status" value="1"/>
</dbReference>
<dbReference type="Pfam" id="PF10431">
    <property type="entry name" value="ClpB_D2-small"/>
    <property type="match status" value="1"/>
</dbReference>
<dbReference type="SMART" id="SM00382">
    <property type="entry name" value="AAA"/>
    <property type="match status" value="1"/>
</dbReference>
<dbReference type="SMART" id="SM01086">
    <property type="entry name" value="ClpB_D2-small"/>
    <property type="match status" value="1"/>
</dbReference>
<dbReference type="SUPFAM" id="SSF52540">
    <property type="entry name" value="P-loop containing nucleoside triphosphate hydrolases"/>
    <property type="match status" value="1"/>
</dbReference>
<name>HSLU_CAMJJ</name>
<sequence>MNLTPKEIVKFLDDYVIGQKKAKKIIAIALRNRYRRMQLSPELQDDIVPKNILMIGSTGVGKTEIARRLAKMMGFPFIKIEASKYTEVGFVGRDVESMVRDLANAALNLVKNEQREKNKDKIDEFIENKILEKLLPPLPKGISDEKQEEYKNSLEKMRTKLRNGNLDESTIEIEISQNMFDTNPNLPPEMGAMQDIVKVIGVGSKKVKKEMKIKDAKNALKNEAGEKILDQESIKSEALKRAENEGIIFIDEIDKIAVSSGNSNRQDPSKEGVQRDLLPIVEGSNVQTKIGTLKTDHILFIAAGAFHLSKPSDLIPELQGRFPLRVELDSLDDKALYEILTRPKNSLLKQYSQLLKTENLELEFDDEAIKEIAKIASRANEEMQDIGARRLHTVIEKLLEDLSFEADEYAGKKFVVDKKMVEEKLGDIIENKDLARYIL</sequence>
<feature type="chain" id="PRO_1000012726" description="ATP-dependent protease ATPase subunit HslU">
    <location>
        <begin position="1"/>
        <end position="439"/>
    </location>
</feature>
<feature type="binding site" evidence="1">
    <location>
        <position position="17"/>
    </location>
    <ligand>
        <name>ATP</name>
        <dbReference type="ChEBI" id="CHEBI:30616"/>
    </ligand>
</feature>
<feature type="binding site" evidence="1">
    <location>
        <begin position="59"/>
        <end position="64"/>
    </location>
    <ligand>
        <name>ATP</name>
        <dbReference type="ChEBI" id="CHEBI:30616"/>
    </ligand>
</feature>
<feature type="binding site" evidence="1">
    <location>
        <position position="251"/>
    </location>
    <ligand>
        <name>ATP</name>
        <dbReference type="ChEBI" id="CHEBI:30616"/>
    </ligand>
</feature>
<feature type="binding site" evidence="1">
    <location>
        <position position="317"/>
    </location>
    <ligand>
        <name>ATP</name>
        <dbReference type="ChEBI" id="CHEBI:30616"/>
    </ligand>
</feature>
<feature type="binding site" evidence="1">
    <location>
        <position position="389"/>
    </location>
    <ligand>
        <name>ATP</name>
        <dbReference type="ChEBI" id="CHEBI:30616"/>
    </ligand>
</feature>
<keyword id="KW-0067">ATP-binding</keyword>
<keyword id="KW-0143">Chaperone</keyword>
<keyword id="KW-0963">Cytoplasm</keyword>
<keyword id="KW-0547">Nucleotide-binding</keyword>
<keyword id="KW-0346">Stress response</keyword>
<gene>
    <name evidence="1" type="primary">hslU</name>
    <name type="ordered locus">CJJ81176_0689</name>
</gene>
<organism>
    <name type="scientific">Campylobacter jejuni subsp. jejuni serotype O:23/36 (strain 81-176)</name>
    <dbReference type="NCBI Taxonomy" id="354242"/>
    <lineage>
        <taxon>Bacteria</taxon>
        <taxon>Pseudomonadati</taxon>
        <taxon>Campylobacterota</taxon>
        <taxon>Epsilonproteobacteria</taxon>
        <taxon>Campylobacterales</taxon>
        <taxon>Campylobacteraceae</taxon>
        <taxon>Campylobacter</taxon>
    </lineage>
</organism>
<evidence type="ECO:0000255" key="1">
    <source>
        <dbReference type="HAMAP-Rule" id="MF_00249"/>
    </source>
</evidence>
<accession>A1VZ21</accession>
<protein>
    <recommendedName>
        <fullName evidence="1">ATP-dependent protease ATPase subunit HslU</fullName>
    </recommendedName>
    <alternativeName>
        <fullName evidence="1">Unfoldase HslU</fullName>
    </alternativeName>
</protein>
<reference key="1">
    <citation type="submission" date="2006-12" db="EMBL/GenBank/DDBJ databases">
        <authorList>
            <person name="Fouts D.E."/>
            <person name="Nelson K.E."/>
            <person name="Sebastian Y."/>
        </authorList>
    </citation>
    <scope>NUCLEOTIDE SEQUENCE [LARGE SCALE GENOMIC DNA]</scope>
    <source>
        <strain>81-176</strain>
    </source>
</reference>
<comment type="function">
    <text evidence="1">ATPase subunit of a proteasome-like degradation complex; this subunit has chaperone activity. The binding of ATP and its subsequent hydrolysis by HslU are essential for unfolding of protein substrates subsequently hydrolyzed by HslV. HslU recognizes the N-terminal part of its protein substrates and unfolds these before they are guided to HslV for hydrolysis.</text>
</comment>
<comment type="subunit">
    <text evidence="1">A double ring-shaped homohexamer of HslV is capped on each side by a ring-shaped HslU homohexamer. The assembly of the HslU/HslV complex is dependent on binding of ATP.</text>
</comment>
<comment type="subcellular location">
    <subcellularLocation>
        <location evidence="1">Cytoplasm</location>
    </subcellularLocation>
</comment>
<comment type="similarity">
    <text evidence="1">Belongs to the ClpX chaperone family. HslU subfamily.</text>
</comment>
<proteinExistence type="inferred from homology"/>